<gene>
    <name type="ordered locus">Os07g0602900</name>
    <name type="ordered locus">LOC_Os07g41160</name>
    <name type="ORF">OSJNBb0018H10.21</name>
    <name type="ORF">OSJNBb0039M16.11</name>
</gene>
<sequence length="319" mass="33397">MAASRDFLGGFGGEVGGAAVAGEKGGGESDEIELSLGLSLGGCFGADLAREFKKPRLVRSSSIASICSLPGGGGGGAGGDDVATAAPAPAPLMRTSSLPTETEEERWRRREMQSLKRLEAKRKRLERRNSMNSGRSAGAGGGGRDDGQDAMYPTGFQLRRSVVSQGSTSSCMPEQGVGVGAEAMDTSSSDNASCQNKPLPPTASSGGGGGGRPPANGSMKEQPPLRTLRSLTMRTTSTGDLRKSMMEDMPMVSSRVDGPNGRKIDGFLYKYRKREEVRIVCVCHGNFLTPAEFVKHAGGGDVTNPLRHIVVNPSRSVFL</sequence>
<organism>
    <name type="scientific">Oryza sativa subsp. japonica</name>
    <name type="common">Rice</name>
    <dbReference type="NCBI Taxonomy" id="39947"/>
    <lineage>
        <taxon>Eukaryota</taxon>
        <taxon>Viridiplantae</taxon>
        <taxon>Streptophyta</taxon>
        <taxon>Embryophyta</taxon>
        <taxon>Tracheophyta</taxon>
        <taxon>Spermatophyta</taxon>
        <taxon>Magnoliopsida</taxon>
        <taxon>Liliopsida</taxon>
        <taxon>Poales</taxon>
        <taxon>Poaceae</taxon>
        <taxon>BOP clade</taxon>
        <taxon>Oryzoideae</taxon>
        <taxon>Oryzeae</taxon>
        <taxon>Oryzinae</taxon>
        <taxon>Oryza</taxon>
        <taxon>Oryza sativa</taxon>
    </lineage>
</organism>
<protein>
    <recommendedName>
        <fullName>Ninja-family protein Os07g0602900</fullName>
    </recommendedName>
</protein>
<reference key="1">
    <citation type="journal article" date="2005" name="Nature">
        <title>The map-based sequence of the rice genome.</title>
        <authorList>
            <consortium name="International rice genome sequencing project (IRGSP)"/>
        </authorList>
    </citation>
    <scope>NUCLEOTIDE SEQUENCE [LARGE SCALE GENOMIC DNA]</scope>
    <source>
        <strain>cv. Nipponbare</strain>
    </source>
</reference>
<reference key="2">
    <citation type="journal article" date="2008" name="Nucleic Acids Res.">
        <title>The rice annotation project database (RAP-DB): 2008 update.</title>
        <authorList>
            <consortium name="The rice annotation project (RAP)"/>
        </authorList>
    </citation>
    <scope>GENOME REANNOTATION</scope>
    <source>
        <strain>cv. Nipponbare</strain>
    </source>
</reference>
<reference key="3">
    <citation type="journal article" date="2013" name="Rice">
        <title>Improvement of the Oryza sativa Nipponbare reference genome using next generation sequence and optical map data.</title>
        <authorList>
            <person name="Kawahara Y."/>
            <person name="de la Bastide M."/>
            <person name="Hamilton J.P."/>
            <person name="Kanamori H."/>
            <person name="McCombie W.R."/>
            <person name="Ouyang S."/>
            <person name="Schwartz D.C."/>
            <person name="Tanaka T."/>
            <person name="Wu J."/>
            <person name="Zhou S."/>
            <person name="Childs K.L."/>
            <person name="Davidson R.M."/>
            <person name="Lin H."/>
            <person name="Quesada-Ocampo L."/>
            <person name="Vaillancourt B."/>
            <person name="Sakai H."/>
            <person name="Lee S.S."/>
            <person name="Kim J."/>
            <person name="Numa H."/>
            <person name="Itoh T."/>
            <person name="Buell C.R."/>
            <person name="Matsumoto T."/>
        </authorList>
    </citation>
    <scope>GENOME REANNOTATION</scope>
    <source>
        <strain>cv. Nipponbare</strain>
    </source>
</reference>
<reference key="4">
    <citation type="submission" date="2006-10" db="EMBL/GenBank/DDBJ databases">
        <title>Oryza sativa full length cDNA.</title>
        <authorList>
            <consortium name="The rice full-length cDNA consortium"/>
        </authorList>
    </citation>
    <scope>NUCLEOTIDE SEQUENCE [LARGE SCALE MRNA]</scope>
    <source>
        <strain>cv. Nipponbare</strain>
    </source>
</reference>
<feature type="chain" id="PRO_0000369628" description="Ninja-family protein Os07g0602900">
    <location>
        <begin position="1"/>
        <end position="319"/>
    </location>
</feature>
<feature type="region of interest" description="Disordered" evidence="2">
    <location>
        <begin position="1"/>
        <end position="26"/>
    </location>
</feature>
<feature type="region of interest" description="Disordered" evidence="2">
    <location>
        <begin position="69"/>
        <end position="152"/>
    </location>
</feature>
<feature type="region of interest" description="Disordered" evidence="2">
    <location>
        <begin position="181"/>
        <end position="234"/>
    </location>
</feature>
<feature type="compositionally biased region" description="Gly residues" evidence="2">
    <location>
        <begin position="70"/>
        <end position="79"/>
    </location>
</feature>
<feature type="compositionally biased region" description="Basic and acidic residues" evidence="2">
    <location>
        <begin position="105"/>
        <end position="118"/>
    </location>
</feature>
<feature type="compositionally biased region" description="Polar residues" evidence="2">
    <location>
        <begin position="185"/>
        <end position="196"/>
    </location>
</feature>
<feature type="compositionally biased region" description="Low complexity" evidence="2">
    <location>
        <begin position="225"/>
        <end position="234"/>
    </location>
</feature>
<feature type="sequence conflict" description="In Ref. 4; AK240661." evidence="3" ref="4">
    <original>D</original>
    <variation>G</variation>
    <location>
        <position position="145"/>
    </location>
</feature>
<feature type="sequence conflict" description="In Ref. 4; AK240661." evidence="3" ref="4">
    <original>M</original>
    <variation>I</variation>
    <location>
        <position position="251"/>
    </location>
</feature>
<evidence type="ECO:0000250" key="1"/>
<evidence type="ECO:0000256" key="2">
    <source>
        <dbReference type="SAM" id="MobiDB-lite"/>
    </source>
</evidence>
<evidence type="ECO:0000305" key="3"/>
<keyword id="KW-0539">Nucleus</keyword>
<keyword id="KW-1185">Reference proteome</keyword>
<dbReference type="EMBL" id="AP005807">
    <property type="protein sequence ID" value="BAC84471.1"/>
    <property type="molecule type" value="Genomic_DNA"/>
</dbReference>
<dbReference type="EMBL" id="AP005809">
    <property type="protein sequence ID" value="BAD31712.1"/>
    <property type="molecule type" value="Genomic_DNA"/>
</dbReference>
<dbReference type="EMBL" id="AP008213">
    <property type="protein sequence ID" value="BAF22123.2"/>
    <property type="status" value="ALT_SEQ"/>
    <property type="molecule type" value="Genomic_DNA"/>
</dbReference>
<dbReference type="EMBL" id="AP014963">
    <property type="protein sequence ID" value="BAT02533.1"/>
    <property type="molecule type" value="Genomic_DNA"/>
</dbReference>
<dbReference type="EMBL" id="AK240661">
    <property type="status" value="NOT_ANNOTATED_CDS"/>
    <property type="molecule type" value="mRNA"/>
</dbReference>
<dbReference type="RefSeq" id="XP_015644885.1">
    <property type="nucleotide sequence ID" value="XM_015789399.1"/>
</dbReference>
<dbReference type="FunCoup" id="Q6YVY6">
    <property type="interactions" value="902"/>
</dbReference>
<dbReference type="PaxDb" id="39947-Q6YVY6"/>
<dbReference type="EnsemblPlants" id="Os07t0602900-01">
    <property type="protein sequence ID" value="Os07t0602900-01"/>
    <property type="gene ID" value="Os07g0602900"/>
</dbReference>
<dbReference type="Gramene" id="Os07t0602900-01">
    <property type="protein sequence ID" value="Os07t0602900-01"/>
    <property type="gene ID" value="Os07g0602900"/>
</dbReference>
<dbReference type="KEGG" id="dosa:Os07g0602900"/>
<dbReference type="eggNOG" id="ENOG502QW6K">
    <property type="taxonomic scope" value="Eukaryota"/>
</dbReference>
<dbReference type="HOGENOM" id="CLU_034695_0_0_1"/>
<dbReference type="InParanoid" id="Q6YVY6"/>
<dbReference type="OMA" id="FVAEYRC"/>
<dbReference type="OrthoDB" id="667358at2759"/>
<dbReference type="PlantReactome" id="R-OSA-6787011">
    <property type="pathway name" value="Jasmonic acid signaling"/>
</dbReference>
<dbReference type="Proteomes" id="UP000000763">
    <property type="component" value="Chromosome 7"/>
</dbReference>
<dbReference type="Proteomes" id="UP000059680">
    <property type="component" value="Chromosome 7"/>
</dbReference>
<dbReference type="ExpressionAtlas" id="Q6YVY6">
    <property type="expression patterns" value="baseline and differential"/>
</dbReference>
<dbReference type="GO" id="GO:0005634">
    <property type="term" value="C:nucleus"/>
    <property type="evidence" value="ECO:0000318"/>
    <property type="project" value="GO_Central"/>
</dbReference>
<dbReference type="GO" id="GO:0045892">
    <property type="term" value="P:negative regulation of DNA-templated transcription"/>
    <property type="evidence" value="ECO:0000318"/>
    <property type="project" value="GO_Central"/>
</dbReference>
<dbReference type="GO" id="GO:0007165">
    <property type="term" value="P:signal transduction"/>
    <property type="evidence" value="ECO:0007669"/>
    <property type="project" value="InterPro"/>
</dbReference>
<dbReference type="InterPro" id="IPR031307">
    <property type="entry name" value="Ninja_fam"/>
</dbReference>
<dbReference type="InterPro" id="IPR012463">
    <property type="entry name" value="Ninja_motif"/>
</dbReference>
<dbReference type="InterPro" id="IPR032310">
    <property type="entry name" value="NLS_NINJA_AFP-like"/>
</dbReference>
<dbReference type="InterPro" id="IPR032308">
    <property type="entry name" value="TDBD"/>
</dbReference>
<dbReference type="PANTHER" id="PTHR31413">
    <property type="entry name" value="AFP HOMOLOG 2"/>
    <property type="match status" value="1"/>
</dbReference>
<dbReference type="PANTHER" id="PTHR31413:SF31">
    <property type="entry name" value="NINJA-FAMILY PROTEIN AFP3"/>
    <property type="match status" value="1"/>
</dbReference>
<dbReference type="Pfam" id="PF07897">
    <property type="entry name" value="EAR"/>
    <property type="match status" value="1"/>
</dbReference>
<dbReference type="Pfam" id="PF16136">
    <property type="entry name" value="NLS_NINJA_AFP"/>
    <property type="match status" value="1"/>
</dbReference>
<dbReference type="Pfam" id="PF16135">
    <property type="entry name" value="TDBD"/>
    <property type="match status" value="1"/>
</dbReference>
<proteinExistence type="evidence at transcript level"/>
<accession>Q6YVY6</accession>
<accession>A0A0P0X8V5</accession>
<name>NNJA2_ORYSJ</name>
<comment type="subcellular location">
    <subcellularLocation>
        <location evidence="1">Nucleus</location>
    </subcellularLocation>
</comment>
<comment type="similarity">
    <text evidence="3">Belongs to the Ninja family.</text>
</comment>
<comment type="sequence caution" evidence="3">
    <conflict type="erroneous gene model prediction">
        <sequence resource="EMBL-CDS" id="BAF22123"/>
    </conflict>
</comment>